<sequence>MGMRPPSGLPSLSRRSRVLLVAAVVLAALLLLGPRFTDAYTNWLWFGEVGFREVFLTVVVTRIILFAAVALFVGATVWLALLLAYRTRPVFVPMAGPNDPIARYRTTVMSRLKTFGIGIPVLLGLLAGLVAQSNWVTVQLFLNGGDFGEQDPQFHLDVGFYAFDLPFYRMVLNWMFVAVVIAFFASLVTHYIFGGLRLSGREGTLTRPARIQLAVIAGLFVLLKAVAYWFDRYDLLSSSRKEPTFYGGSFTDINAVLPAKLILLAIAVICAVAFFAGVVLRDLRVPAMAAALLVLSSVLVGAVYPLVVEQFSVRPNAADKESEYIERNIAATRQAFGITSDKIEYKDYKGESDKNPLDVPVDAATIGNARLLDPNILSPTFTQLRQLKNFYGFPESLDIDRYNLDGNLQDYIVAARELSPAALTGNQTDWINKHTVYTHGNGFVAAPANRVNKPQSEDVAAGGSSDSGYPIFLVSDLFTPKDRQRIPVEQPRIYFGELISQSDPDYAIVGGAEGQAPREYDSDTAQYTYTGKGGVPIGNWFNRLAFAAKYAERNILFSSAIGDDSKIIFNRSPRERVQKVAPWLTTDGNAYPAVVDERIVWIVDAYTTLDNYPYAQKTSLEGAVEDSIDKKTGRLLPRKEVSYIRNSVKATVDAYDGTVTLYEVDSTDPVLKAWRGVFPGAVKPESEISPELRAHFRYPEDLFKVQREMLTKYHVDNPREFFTNNAFWSVPSDPTIEGGSFNQPPYYVLLGDPKTNRPVFNLTSAMVGYNRQFLSAYISVRSDPDDYGKFTILRLPTDTQTQGPQQTQNTMTTAPQVSQEKTLLSNSNKIRYGNLLTLPIADGGILYVEPFYNERNTGPNTATFPQLLRVLVSYRDQAGSVKVGYASTLAEALNQVLPGAGSLATPFGGDPATRPQPGTAPPVVDSTQPPADGGTPQPQTTPPPTGSAAKDAAAAELDRKIEAVRNAMRSGNFQDFGKALEELEAAVKTYQDAGR</sequence>
<proteinExistence type="inferred from homology"/>
<reference key="1">
    <citation type="journal article" date="2004" name="Proc. Natl. Acad. Sci. U.S.A.">
        <title>The complete genomic sequence of Nocardia farcinica IFM 10152.</title>
        <authorList>
            <person name="Ishikawa J."/>
            <person name="Yamashita A."/>
            <person name="Mikami Y."/>
            <person name="Hoshino Y."/>
            <person name="Kurita H."/>
            <person name="Hotta K."/>
            <person name="Shiba T."/>
            <person name="Hattori M."/>
        </authorList>
    </citation>
    <scope>NUCLEOTIDE SEQUENCE [LARGE SCALE GENOMIC DNA]</scope>
    <source>
        <strain>IFM 10152</strain>
    </source>
</reference>
<feature type="chain" id="PRO_0000157726" description="UPF0182 protein NFA_45260">
    <location>
        <begin position="1"/>
        <end position="995"/>
    </location>
</feature>
<feature type="transmembrane region" description="Helical" evidence="1">
    <location>
        <begin position="18"/>
        <end position="38"/>
    </location>
</feature>
<feature type="transmembrane region" description="Helical" evidence="1">
    <location>
        <begin position="63"/>
        <end position="83"/>
    </location>
</feature>
<feature type="transmembrane region" description="Helical" evidence="1">
    <location>
        <begin position="115"/>
        <end position="135"/>
    </location>
</feature>
<feature type="transmembrane region" description="Helical" evidence="1">
    <location>
        <begin position="176"/>
        <end position="196"/>
    </location>
</feature>
<feature type="transmembrane region" description="Helical" evidence="1">
    <location>
        <begin position="211"/>
        <end position="231"/>
    </location>
</feature>
<feature type="transmembrane region" description="Helical" evidence="1">
    <location>
        <begin position="260"/>
        <end position="280"/>
    </location>
</feature>
<feature type="transmembrane region" description="Helical" evidence="1">
    <location>
        <begin position="288"/>
        <end position="308"/>
    </location>
</feature>
<feature type="region of interest" description="Disordered" evidence="2">
    <location>
        <begin position="904"/>
        <end position="957"/>
    </location>
</feature>
<feature type="compositionally biased region" description="Low complexity" evidence="2">
    <location>
        <begin position="927"/>
        <end position="938"/>
    </location>
</feature>
<feature type="compositionally biased region" description="Low complexity" evidence="2">
    <location>
        <begin position="946"/>
        <end position="955"/>
    </location>
</feature>
<dbReference type="EMBL" id="AP006618">
    <property type="protein sequence ID" value="BAD59377.1"/>
    <property type="molecule type" value="Genomic_DNA"/>
</dbReference>
<dbReference type="RefSeq" id="WP_011211061.1">
    <property type="nucleotide sequence ID" value="NC_006361.1"/>
</dbReference>
<dbReference type="SMR" id="Q5YR14"/>
<dbReference type="STRING" id="247156.NFA_45260"/>
<dbReference type="GeneID" id="61135133"/>
<dbReference type="KEGG" id="nfa:NFA_45260"/>
<dbReference type="eggNOG" id="COG1615">
    <property type="taxonomic scope" value="Bacteria"/>
</dbReference>
<dbReference type="HOGENOM" id="CLU_007733_1_0_11"/>
<dbReference type="OrthoDB" id="9763654at2"/>
<dbReference type="Proteomes" id="UP000006820">
    <property type="component" value="Chromosome"/>
</dbReference>
<dbReference type="GO" id="GO:0005576">
    <property type="term" value="C:extracellular region"/>
    <property type="evidence" value="ECO:0007669"/>
    <property type="project" value="TreeGrafter"/>
</dbReference>
<dbReference type="GO" id="GO:0005886">
    <property type="term" value="C:plasma membrane"/>
    <property type="evidence" value="ECO:0007669"/>
    <property type="project" value="UniProtKB-SubCell"/>
</dbReference>
<dbReference type="HAMAP" id="MF_01600">
    <property type="entry name" value="UPF0182"/>
    <property type="match status" value="1"/>
</dbReference>
<dbReference type="InterPro" id="IPR005372">
    <property type="entry name" value="UPF0182"/>
</dbReference>
<dbReference type="NCBIfam" id="NF000825">
    <property type="entry name" value="PRK00068.1"/>
    <property type="match status" value="1"/>
</dbReference>
<dbReference type="NCBIfam" id="NF009097">
    <property type="entry name" value="PRK12438.1"/>
    <property type="match status" value="1"/>
</dbReference>
<dbReference type="PANTHER" id="PTHR39344">
    <property type="entry name" value="UPF0182 PROTEIN SLL1060"/>
    <property type="match status" value="1"/>
</dbReference>
<dbReference type="PANTHER" id="PTHR39344:SF1">
    <property type="entry name" value="UPF0182 PROTEIN SLL1060"/>
    <property type="match status" value="1"/>
</dbReference>
<dbReference type="Pfam" id="PF03699">
    <property type="entry name" value="UPF0182"/>
    <property type="match status" value="1"/>
</dbReference>
<accession>Q5YR14</accession>
<comment type="subcellular location">
    <subcellularLocation>
        <location evidence="1">Cell membrane</location>
        <topology evidence="1">Multi-pass membrane protein</topology>
    </subcellularLocation>
</comment>
<comment type="similarity">
    <text evidence="1">Belongs to the UPF0182 family.</text>
</comment>
<protein>
    <recommendedName>
        <fullName evidence="1">UPF0182 protein NFA_45260</fullName>
    </recommendedName>
</protein>
<evidence type="ECO:0000255" key="1">
    <source>
        <dbReference type="HAMAP-Rule" id="MF_01600"/>
    </source>
</evidence>
<evidence type="ECO:0000256" key="2">
    <source>
        <dbReference type="SAM" id="MobiDB-lite"/>
    </source>
</evidence>
<name>Y4526_NOCFA</name>
<organism>
    <name type="scientific">Nocardia farcinica (strain IFM 10152)</name>
    <dbReference type="NCBI Taxonomy" id="247156"/>
    <lineage>
        <taxon>Bacteria</taxon>
        <taxon>Bacillati</taxon>
        <taxon>Actinomycetota</taxon>
        <taxon>Actinomycetes</taxon>
        <taxon>Mycobacteriales</taxon>
        <taxon>Nocardiaceae</taxon>
        <taxon>Nocardia</taxon>
    </lineage>
</organism>
<gene>
    <name type="ordered locus">NFA_45260</name>
</gene>
<keyword id="KW-1003">Cell membrane</keyword>
<keyword id="KW-0472">Membrane</keyword>
<keyword id="KW-1185">Reference proteome</keyword>
<keyword id="KW-0812">Transmembrane</keyword>
<keyword id="KW-1133">Transmembrane helix</keyword>